<gene>
    <name evidence="1" type="primary">rplU</name>
    <name type="ordered locus">Noca_3451</name>
</gene>
<feature type="chain" id="PRO_1000067864" description="Large ribosomal subunit protein bL21">
    <location>
        <begin position="1"/>
        <end position="102"/>
    </location>
</feature>
<accession>A1SMB6</accession>
<comment type="function">
    <text evidence="1">This protein binds to 23S rRNA in the presence of protein L20.</text>
</comment>
<comment type="subunit">
    <text evidence="1">Part of the 50S ribosomal subunit. Contacts protein L20.</text>
</comment>
<comment type="similarity">
    <text evidence="1">Belongs to the bacterial ribosomal protein bL21 family.</text>
</comment>
<dbReference type="EMBL" id="CP000509">
    <property type="protein sequence ID" value="ABL82951.1"/>
    <property type="molecule type" value="Genomic_DNA"/>
</dbReference>
<dbReference type="RefSeq" id="WP_011756884.1">
    <property type="nucleotide sequence ID" value="NC_008699.1"/>
</dbReference>
<dbReference type="SMR" id="A1SMB6"/>
<dbReference type="STRING" id="196162.Noca_3451"/>
<dbReference type="KEGG" id="nca:Noca_3451"/>
<dbReference type="eggNOG" id="COG0261">
    <property type="taxonomic scope" value="Bacteria"/>
</dbReference>
<dbReference type="HOGENOM" id="CLU_061463_3_0_11"/>
<dbReference type="OrthoDB" id="9813334at2"/>
<dbReference type="Proteomes" id="UP000000640">
    <property type="component" value="Chromosome"/>
</dbReference>
<dbReference type="GO" id="GO:0005737">
    <property type="term" value="C:cytoplasm"/>
    <property type="evidence" value="ECO:0007669"/>
    <property type="project" value="UniProtKB-ARBA"/>
</dbReference>
<dbReference type="GO" id="GO:1990904">
    <property type="term" value="C:ribonucleoprotein complex"/>
    <property type="evidence" value="ECO:0007669"/>
    <property type="project" value="UniProtKB-KW"/>
</dbReference>
<dbReference type="GO" id="GO:0005840">
    <property type="term" value="C:ribosome"/>
    <property type="evidence" value="ECO:0007669"/>
    <property type="project" value="UniProtKB-KW"/>
</dbReference>
<dbReference type="GO" id="GO:0019843">
    <property type="term" value="F:rRNA binding"/>
    <property type="evidence" value="ECO:0007669"/>
    <property type="project" value="UniProtKB-UniRule"/>
</dbReference>
<dbReference type="GO" id="GO:0003735">
    <property type="term" value="F:structural constituent of ribosome"/>
    <property type="evidence" value="ECO:0007669"/>
    <property type="project" value="InterPro"/>
</dbReference>
<dbReference type="GO" id="GO:0006412">
    <property type="term" value="P:translation"/>
    <property type="evidence" value="ECO:0007669"/>
    <property type="project" value="UniProtKB-UniRule"/>
</dbReference>
<dbReference type="HAMAP" id="MF_01363">
    <property type="entry name" value="Ribosomal_bL21"/>
    <property type="match status" value="1"/>
</dbReference>
<dbReference type="InterPro" id="IPR028909">
    <property type="entry name" value="bL21-like"/>
</dbReference>
<dbReference type="InterPro" id="IPR036164">
    <property type="entry name" value="bL21-like_sf"/>
</dbReference>
<dbReference type="InterPro" id="IPR001787">
    <property type="entry name" value="Ribosomal_bL21"/>
</dbReference>
<dbReference type="InterPro" id="IPR018258">
    <property type="entry name" value="Ribosomal_bL21_CS"/>
</dbReference>
<dbReference type="NCBIfam" id="TIGR00061">
    <property type="entry name" value="L21"/>
    <property type="match status" value="1"/>
</dbReference>
<dbReference type="PANTHER" id="PTHR21349">
    <property type="entry name" value="50S RIBOSOMAL PROTEIN L21"/>
    <property type="match status" value="1"/>
</dbReference>
<dbReference type="PANTHER" id="PTHR21349:SF0">
    <property type="entry name" value="LARGE RIBOSOMAL SUBUNIT PROTEIN BL21M"/>
    <property type="match status" value="1"/>
</dbReference>
<dbReference type="Pfam" id="PF00829">
    <property type="entry name" value="Ribosomal_L21p"/>
    <property type="match status" value="1"/>
</dbReference>
<dbReference type="SUPFAM" id="SSF141091">
    <property type="entry name" value="L21p-like"/>
    <property type="match status" value="1"/>
</dbReference>
<dbReference type="PROSITE" id="PS01169">
    <property type="entry name" value="RIBOSOMAL_L21"/>
    <property type="match status" value="1"/>
</dbReference>
<reference key="1">
    <citation type="submission" date="2006-12" db="EMBL/GenBank/DDBJ databases">
        <title>Complete sequence of chromosome 1 of Nocardioides sp. JS614.</title>
        <authorList>
            <person name="Copeland A."/>
            <person name="Lucas S."/>
            <person name="Lapidus A."/>
            <person name="Barry K."/>
            <person name="Detter J.C."/>
            <person name="Glavina del Rio T."/>
            <person name="Hammon N."/>
            <person name="Israni S."/>
            <person name="Dalin E."/>
            <person name="Tice H."/>
            <person name="Pitluck S."/>
            <person name="Thompson L.S."/>
            <person name="Brettin T."/>
            <person name="Bruce D."/>
            <person name="Han C."/>
            <person name="Tapia R."/>
            <person name="Schmutz J."/>
            <person name="Larimer F."/>
            <person name="Land M."/>
            <person name="Hauser L."/>
            <person name="Kyrpides N."/>
            <person name="Kim E."/>
            <person name="Mattes T."/>
            <person name="Gossett J."/>
            <person name="Richardson P."/>
        </authorList>
    </citation>
    <scope>NUCLEOTIDE SEQUENCE [LARGE SCALE GENOMIC DNA]</scope>
    <source>
        <strain>ATCC BAA-499 / JS614</strain>
    </source>
</reference>
<sequence>MYAIVRAGAKQQKVAVGDVIEIDQVETAAGEKVTLPVVLVVDGETVTSDAKKLDKASVTAEVLGGTKGPKIVIQKYKNKTGYKKRQGHRQKYTQVKVTDISL</sequence>
<name>RL21_NOCSJ</name>
<keyword id="KW-1185">Reference proteome</keyword>
<keyword id="KW-0687">Ribonucleoprotein</keyword>
<keyword id="KW-0689">Ribosomal protein</keyword>
<keyword id="KW-0694">RNA-binding</keyword>
<keyword id="KW-0699">rRNA-binding</keyword>
<protein>
    <recommendedName>
        <fullName evidence="1">Large ribosomal subunit protein bL21</fullName>
    </recommendedName>
    <alternativeName>
        <fullName evidence="2">50S ribosomal protein L21</fullName>
    </alternativeName>
</protein>
<organism>
    <name type="scientific">Nocardioides sp. (strain ATCC BAA-499 / JS614)</name>
    <dbReference type="NCBI Taxonomy" id="196162"/>
    <lineage>
        <taxon>Bacteria</taxon>
        <taxon>Bacillati</taxon>
        <taxon>Actinomycetota</taxon>
        <taxon>Actinomycetes</taxon>
        <taxon>Propionibacteriales</taxon>
        <taxon>Nocardioidaceae</taxon>
        <taxon>Nocardioides</taxon>
    </lineage>
</organism>
<evidence type="ECO:0000255" key="1">
    <source>
        <dbReference type="HAMAP-Rule" id="MF_01363"/>
    </source>
</evidence>
<evidence type="ECO:0000305" key="2"/>
<proteinExistence type="inferred from homology"/>